<keyword id="KW-0963">Cytoplasm</keyword>
<keyword id="KW-0324">Glycolysis</keyword>
<keyword id="KW-0520">NAD</keyword>
<keyword id="KW-0521">NADP</keyword>
<keyword id="KW-0560">Oxidoreductase</keyword>
<protein>
    <recommendedName>
        <fullName evidence="1">Glyceraldehyde-3-phosphate dehydrogenase</fullName>
        <shortName evidence="1">GAPDH</shortName>
        <ecNumber evidence="1">1.2.1.59</ecNumber>
    </recommendedName>
    <alternativeName>
        <fullName evidence="1">NAD(P)-dependent glyceraldehyde-3-phosphate dehydrogenase</fullName>
    </alternativeName>
</protein>
<dbReference type="EC" id="1.2.1.59" evidence="1"/>
<dbReference type="EMBL" id="CP001403">
    <property type="protein sequence ID" value="ACP45847.1"/>
    <property type="molecule type" value="Genomic_DNA"/>
</dbReference>
<dbReference type="RefSeq" id="WP_012716227.1">
    <property type="nucleotide sequence ID" value="NC_012622.1"/>
</dbReference>
<dbReference type="SMR" id="C3NEV8"/>
<dbReference type="KEGG" id="siy:YG5714_1585"/>
<dbReference type="HOGENOM" id="CLU_069533_0_0_2"/>
<dbReference type="UniPathway" id="UPA00109">
    <property type="reaction ID" value="UER00184"/>
</dbReference>
<dbReference type="Proteomes" id="UP000002308">
    <property type="component" value="Chromosome"/>
</dbReference>
<dbReference type="GO" id="GO:0005737">
    <property type="term" value="C:cytoplasm"/>
    <property type="evidence" value="ECO:0007669"/>
    <property type="project" value="UniProtKB-SubCell"/>
</dbReference>
<dbReference type="GO" id="GO:0008839">
    <property type="term" value="F:4-hydroxy-tetrahydrodipicolinate reductase"/>
    <property type="evidence" value="ECO:0007669"/>
    <property type="project" value="InterPro"/>
</dbReference>
<dbReference type="GO" id="GO:0004365">
    <property type="term" value="F:glyceraldehyde-3-phosphate dehydrogenase (NAD+) (phosphorylating) activity"/>
    <property type="evidence" value="ECO:0007669"/>
    <property type="project" value="UniProtKB-UniRule"/>
</dbReference>
<dbReference type="GO" id="GO:0047100">
    <property type="term" value="F:glyceraldehyde-3-phosphate dehydrogenase (NADP+) (phosphorylating) activity"/>
    <property type="evidence" value="ECO:0007669"/>
    <property type="project" value="RHEA"/>
</dbReference>
<dbReference type="GO" id="GO:0051287">
    <property type="term" value="F:NAD binding"/>
    <property type="evidence" value="ECO:0007669"/>
    <property type="project" value="InterPro"/>
</dbReference>
<dbReference type="GO" id="GO:0050661">
    <property type="term" value="F:NADP binding"/>
    <property type="evidence" value="ECO:0007669"/>
    <property type="project" value="InterPro"/>
</dbReference>
<dbReference type="GO" id="GO:0006096">
    <property type="term" value="P:glycolytic process"/>
    <property type="evidence" value="ECO:0007669"/>
    <property type="project" value="UniProtKB-UniRule"/>
</dbReference>
<dbReference type="GO" id="GO:0009089">
    <property type="term" value="P:lysine biosynthetic process via diaminopimelate"/>
    <property type="evidence" value="ECO:0007669"/>
    <property type="project" value="InterPro"/>
</dbReference>
<dbReference type="CDD" id="cd18127">
    <property type="entry name" value="GAPDH_II_C"/>
    <property type="match status" value="1"/>
</dbReference>
<dbReference type="CDD" id="cd02278">
    <property type="entry name" value="GAPDH_II_N"/>
    <property type="match status" value="1"/>
</dbReference>
<dbReference type="Gene3D" id="3.30.360.10">
    <property type="entry name" value="Dihydrodipicolinate Reductase, domain 2"/>
    <property type="match status" value="1"/>
</dbReference>
<dbReference type="Gene3D" id="3.40.50.720">
    <property type="entry name" value="NAD(P)-binding Rossmann-like Domain"/>
    <property type="match status" value="1"/>
</dbReference>
<dbReference type="HAMAP" id="MF_00559">
    <property type="entry name" value="G3P_dehdrog_arch"/>
    <property type="match status" value="1"/>
</dbReference>
<dbReference type="InterPro" id="IPR000846">
    <property type="entry name" value="DapB_N"/>
</dbReference>
<dbReference type="InterPro" id="IPR020831">
    <property type="entry name" value="GlycerAld/Erythrose_P_DH"/>
</dbReference>
<dbReference type="InterPro" id="IPR020830">
    <property type="entry name" value="GlycerAld_3-P_DH_AS"/>
</dbReference>
<dbReference type="InterPro" id="IPR020829">
    <property type="entry name" value="GlycerAld_3-P_DH_cat"/>
</dbReference>
<dbReference type="InterPro" id="IPR020828">
    <property type="entry name" value="GlycerAld_3-P_DH_NAD(P)-bd"/>
</dbReference>
<dbReference type="InterPro" id="IPR006436">
    <property type="entry name" value="Glyceraldehyde-3-P_DH_2_arc"/>
</dbReference>
<dbReference type="InterPro" id="IPR036291">
    <property type="entry name" value="NAD(P)-bd_dom_sf"/>
</dbReference>
<dbReference type="NCBIfam" id="TIGR01546">
    <property type="entry name" value="GAPDH-II_archae"/>
    <property type="match status" value="1"/>
</dbReference>
<dbReference type="NCBIfam" id="NF003251">
    <property type="entry name" value="PRK04207.1"/>
    <property type="match status" value="1"/>
</dbReference>
<dbReference type="Pfam" id="PF01113">
    <property type="entry name" value="DapB_N"/>
    <property type="match status" value="1"/>
</dbReference>
<dbReference type="Pfam" id="PF02800">
    <property type="entry name" value="Gp_dh_C"/>
    <property type="match status" value="1"/>
</dbReference>
<dbReference type="PIRSF" id="PIRSF000149">
    <property type="entry name" value="GAP_DH"/>
    <property type="match status" value="1"/>
</dbReference>
<dbReference type="SMART" id="SM00846">
    <property type="entry name" value="Gp_dh_N"/>
    <property type="match status" value="1"/>
</dbReference>
<dbReference type="SUPFAM" id="SSF55347">
    <property type="entry name" value="Glyceraldehyde-3-phosphate dehydrogenase-like, C-terminal domain"/>
    <property type="match status" value="1"/>
</dbReference>
<dbReference type="SUPFAM" id="SSF51735">
    <property type="entry name" value="NAD(P)-binding Rossmann-fold domains"/>
    <property type="match status" value="1"/>
</dbReference>
<dbReference type="PROSITE" id="PS00071">
    <property type="entry name" value="GAPDH"/>
    <property type="match status" value="1"/>
</dbReference>
<accession>C3NEV8</accession>
<feature type="chain" id="PRO_1000212040" description="Glyceraldehyde-3-phosphate dehydrogenase">
    <location>
        <begin position="1"/>
        <end position="340"/>
    </location>
</feature>
<feature type="active site" description="Nucleophile" evidence="1">
    <location>
        <position position="139"/>
    </location>
</feature>
<feature type="binding site" evidence="1">
    <location>
        <begin position="11"/>
        <end position="12"/>
    </location>
    <ligand>
        <name>NAD(+)</name>
        <dbReference type="ChEBI" id="CHEBI:57540"/>
    </ligand>
</feature>
<feature type="binding site" evidence="1">
    <location>
        <position position="109"/>
    </location>
    <ligand>
        <name>NAD(+)</name>
        <dbReference type="ChEBI" id="CHEBI:57540"/>
    </ligand>
</feature>
<feature type="binding site" evidence="1">
    <location>
        <begin position="138"/>
        <end position="140"/>
    </location>
    <ligand>
        <name>D-glyceraldehyde 3-phosphate</name>
        <dbReference type="ChEBI" id="CHEBI:59776"/>
    </ligand>
</feature>
<feature type="binding site" evidence="1">
    <location>
        <position position="167"/>
    </location>
    <ligand>
        <name>NAD(+)</name>
        <dbReference type="ChEBI" id="CHEBI:57540"/>
    </ligand>
</feature>
<feature type="binding site" evidence="1">
    <location>
        <begin position="193"/>
        <end position="194"/>
    </location>
    <ligand>
        <name>D-glyceraldehyde 3-phosphate</name>
        <dbReference type="ChEBI" id="CHEBI:59776"/>
    </ligand>
</feature>
<feature type="binding site" evidence="1">
    <location>
        <position position="300"/>
    </location>
    <ligand>
        <name>NAD(+)</name>
        <dbReference type="ChEBI" id="CHEBI:57540"/>
    </ligand>
</feature>
<organism>
    <name type="scientific">Saccharolobus islandicus (strain Y.G.57.14 / Yellowstone #1)</name>
    <name type="common">Sulfolobus islandicus</name>
    <dbReference type="NCBI Taxonomy" id="439386"/>
    <lineage>
        <taxon>Archaea</taxon>
        <taxon>Thermoproteota</taxon>
        <taxon>Thermoprotei</taxon>
        <taxon>Sulfolobales</taxon>
        <taxon>Sulfolobaceae</taxon>
        <taxon>Saccharolobus</taxon>
    </lineage>
</organism>
<proteinExistence type="inferred from homology"/>
<reference key="1">
    <citation type="journal article" date="2009" name="Proc. Natl. Acad. Sci. U.S.A.">
        <title>Biogeography of the Sulfolobus islandicus pan-genome.</title>
        <authorList>
            <person name="Reno M.L."/>
            <person name="Held N.L."/>
            <person name="Fields C.J."/>
            <person name="Burke P.V."/>
            <person name="Whitaker R.J."/>
        </authorList>
    </citation>
    <scope>NUCLEOTIDE SEQUENCE [LARGE SCALE GENOMIC DNA]</scope>
    <source>
        <strain>Y.G.57.14 / Yellowstone #1</strain>
    </source>
</reference>
<evidence type="ECO:0000255" key="1">
    <source>
        <dbReference type="HAMAP-Rule" id="MF_00559"/>
    </source>
</evidence>
<comment type="catalytic activity">
    <reaction evidence="1">
        <text>D-glyceraldehyde 3-phosphate + phosphate + NADP(+) = (2R)-3-phospho-glyceroyl phosphate + NADPH + H(+)</text>
        <dbReference type="Rhea" id="RHEA:10296"/>
        <dbReference type="ChEBI" id="CHEBI:15378"/>
        <dbReference type="ChEBI" id="CHEBI:43474"/>
        <dbReference type="ChEBI" id="CHEBI:57604"/>
        <dbReference type="ChEBI" id="CHEBI:57783"/>
        <dbReference type="ChEBI" id="CHEBI:58349"/>
        <dbReference type="ChEBI" id="CHEBI:59776"/>
        <dbReference type="EC" id="1.2.1.59"/>
    </reaction>
</comment>
<comment type="catalytic activity">
    <reaction evidence="1">
        <text>D-glyceraldehyde 3-phosphate + phosphate + NAD(+) = (2R)-3-phospho-glyceroyl phosphate + NADH + H(+)</text>
        <dbReference type="Rhea" id="RHEA:10300"/>
        <dbReference type="ChEBI" id="CHEBI:15378"/>
        <dbReference type="ChEBI" id="CHEBI:43474"/>
        <dbReference type="ChEBI" id="CHEBI:57540"/>
        <dbReference type="ChEBI" id="CHEBI:57604"/>
        <dbReference type="ChEBI" id="CHEBI:57945"/>
        <dbReference type="ChEBI" id="CHEBI:59776"/>
        <dbReference type="EC" id="1.2.1.59"/>
    </reaction>
</comment>
<comment type="pathway">
    <text evidence="1">Carbohydrate degradation; glycolysis; pyruvate from D-glyceraldehyde 3-phosphate: step 1/5.</text>
</comment>
<comment type="subunit">
    <text evidence="1">Homotetramer.</text>
</comment>
<comment type="subcellular location">
    <subcellularLocation>
        <location evidence="1">Cytoplasm</location>
    </subcellularLocation>
</comment>
<comment type="similarity">
    <text evidence="1">Belongs to the glyceraldehyde-3-phosphate dehydrogenase family.</text>
</comment>
<name>G3P_SACI7</name>
<gene>
    <name evidence="1" type="primary">gap</name>
    <name type="ordered locus">YG5714_1585</name>
</gene>
<sequence length="340" mass="37554">MISVAVNGYGTIGKRVADAILKQPDMRLVGVAKTSPNYEAFIAHRKGIKIYVPQQSIKKFEESGIPVAGTIEDLVKASDIVVDTTPNGVGAQYKPIYQQFQRNAIFQGGEKAEVADISFSALCNYDEALGKKYIRVVSCNTTALLRTICTINKVTKVEKVRATIVRRAADQKEVKKGPINSLVPDPATVPSHHAKDVNSVIKNLDIVTMAVIAPTTLMHMHFINITLKDKVEKKDVLSVLENTPRIVLISSKYDAEATAELVEVARDLKRERNDIPEVMVFDDSVYVKDNEVMLMYAVHQESIVVPENVDAIRASTRLMSAEDSIRITNESLGILKGYLI</sequence>